<feature type="chain" id="PRO_1000212346" description="UPF0235 protein YggU">
    <location>
        <begin position="1"/>
        <end position="96"/>
    </location>
</feature>
<dbReference type="EMBL" id="CP001396">
    <property type="protein sequence ID" value="ACR62519.1"/>
    <property type="molecule type" value="Genomic_DNA"/>
</dbReference>
<dbReference type="RefSeq" id="WP_000994920.1">
    <property type="nucleotide sequence ID" value="NC_012759.1"/>
</dbReference>
<dbReference type="SMR" id="C5A0M2"/>
<dbReference type="KEGG" id="ebw:BWG_2675"/>
<dbReference type="HOGENOM" id="CLU_130694_5_0_6"/>
<dbReference type="GO" id="GO:0005737">
    <property type="term" value="C:cytoplasm"/>
    <property type="evidence" value="ECO:0007669"/>
    <property type="project" value="TreeGrafter"/>
</dbReference>
<dbReference type="Gene3D" id="3.30.1200.10">
    <property type="entry name" value="YggU-like"/>
    <property type="match status" value="1"/>
</dbReference>
<dbReference type="HAMAP" id="MF_00634">
    <property type="entry name" value="UPF0235"/>
    <property type="match status" value="1"/>
</dbReference>
<dbReference type="InterPro" id="IPR003746">
    <property type="entry name" value="DUF167"/>
</dbReference>
<dbReference type="InterPro" id="IPR036591">
    <property type="entry name" value="YggU-like_sf"/>
</dbReference>
<dbReference type="NCBIfam" id="TIGR00251">
    <property type="entry name" value="DUF167 family protein"/>
    <property type="match status" value="1"/>
</dbReference>
<dbReference type="NCBIfam" id="NF003466">
    <property type="entry name" value="PRK05090.1"/>
    <property type="match status" value="1"/>
</dbReference>
<dbReference type="PANTHER" id="PTHR13420">
    <property type="entry name" value="UPF0235 PROTEIN C15ORF40"/>
    <property type="match status" value="1"/>
</dbReference>
<dbReference type="PANTHER" id="PTHR13420:SF7">
    <property type="entry name" value="UPF0235 PROTEIN C15ORF40"/>
    <property type="match status" value="1"/>
</dbReference>
<dbReference type="Pfam" id="PF02594">
    <property type="entry name" value="DUF167"/>
    <property type="match status" value="1"/>
</dbReference>
<dbReference type="SMART" id="SM01152">
    <property type="entry name" value="DUF167"/>
    <property type="match status" value="1"/>
</dbReference>
<dbReference type="SUPFAM" id="SSF69786">
    <property type="entry name" value="YggU-like"/>
    <property type="match status" value="1"/>
</dbReference>
<gene>
    <name evidence="1" type="primary">yggU</name>
    <name type="ordered locus">BWG_2675</name>
</gene>
<protein>
    <recommendedName>
        <fullName evidence="1">UPF0235 protein YggU</fullName>
    </recommendedName>
</protein>
<name>YGGU_ECOBW</name>
<evidence type="ECO:0000255" key="1">
    <source>
        <dbReference type="HAMAP-Rule" id="MF_00634"/>
    </source>
</evidence>
<comment type="similarity">
    <text evidence="1">Belongs to the UPF0235 family.</text>
</comment>
<reference key="1">
    <citation type="journal article" date="2009" name="J. Bacteriol.">
        <title>Genomic sequencing reveals regulatory mutations and recombinational events in the widely used MC4100 lineage of Escherichia coli K-12.</title>
        <authorList>
            <person name="Ferenci T."/>
            <person name="Zhou Z."/>
            <person name="Betteridge T."/>
            <person name="Ren Y."/>
            <person name="Liu Y."/>
            <person name="Feng L."/>
            <person name="Reeves P.R."/>
            <person name="Wang L."/>
        </authorList>
    </citation>
    <scope>NUCLEOTIDE SEQUENCE [LARGE SCALE GENOMIC DNA]</scope>
    <source>
        <strain>K12 / MC4100 / BW2952</strain>
    </source>
</reference>
<organism>
    <name type="scientific">Escherichia coli (strain K12 / MC4100 / BW2952)</name>
    <dbReference type="NCBI Taxonomy" id="595496"/>
    <lineage>
        <taxon>Bacteria</taxon>
        <taxon>Pseudomonadati</taxon>
        <taxon>Pseudomonadota</taxon>
        <taxon>Gammaproteobacteria</taxon>
        <taxon>Enterobacterales</taxon>
        <taxon>Enterobacteriaceae</taxon>
        <taxon>Escherichia</taxon>
    </lineage>
</organism>
<proteinExistence type="inferred from homology"/>
<sequence length="96" mass="10456">MNAVTVNDDGLVLRLYIQPKASRDSIVGLHGDEVKVAITAPPVDGQANSHLVKFLGKQFRVAKSQVVIEKGELGRHKQIKIINPQQIPPEIAALIN</sequence>
<accession>C5A0M2</accession>